<gene>
    <name evidence="1" type="primary">rpsB</name>
    <name type="ordered locus">LGAS_0801</name>
</gene>
<sequence>MTVVTMKQLLEAGVHFGHQTRRWDPKMAPYIFTQRNGIYIIDLQKTIRMLDDAYNYVKAVAQDGGVFLFVGTKKQAQDAVKEEATRAGQYYVNQRWLGGTLTNWTTIQSRVKRLKQLKEMSEDGTFDVLPKKEVALLTKEMEKLERFLGGIEDMPRIPDVMFVVDPKKEKIAVHEANILGIPVVAMVDTNTDPDPIDVVIPANDDAIRAIRLISGAMADAIIEGKQGQDDSEDVEKEMADKAAAENDDEESIEEVVEKSED</sequence>
<keyword id="KW-0687">Ribonucleoprotein</keyword>
<keyword id="KW-0689">Ribosomal protein</keyword>
<evidence type="ECO:0000255" key="1">
    <source>
        <dbReference type="HAMAP-Rule" id="MF_00291"/>
    </source>
</evidence>
<evidence type="ECO:0000256" key="2">
    <source>
        <dbReference type="SAM" id="MobiDB-lite"/>
    </source>
</evidence>
<evidence type="ECO:0000305" key="3"/>
<name>RS2_LACGA</name>
<comment type="similarity">
    <text evidence="1">Belongs to the universal ribosomal protein uS2 family.</text>
</comment>
<comment type="sequence caution" evidence="3">
    <conflict type="erroneous initiation">
        <sequence resource="EMBL-CDS" id="ABJ60192"/>
    </conflict>
</comment>
<organism>
    <name type="scientific">Lactobacillus gasseri (strain ATCC 33323 / DSM 20243 / BCRC 14619 / CIP 102991 / JCM 1131 / KCTC 3163 / NCIMB 11718 / NCTC 13722 / AM63)</name>
    <dbReference type="NCBI Taxonomy" id="324831"/>
    <lineage>
        <taxon>Bacteria</taxon>
        <taxon>Bacillati</taxon>
        <taxon>Bacillota</taxon>
        <taxon>Bacilli</taxon>
        <taxon>Lactobacillales</taxon>
        <taxon>Lactobacillaceae</taxon>
        <taxon>Lactobacillus</taxon>
    </lineage>
</organism>
<feature type="chain" id="PRO_0000352000" description="Small ribosomal subunit protein uS2">
    <location>
        <begin position="1"/>
        <end position="261"/>
    </location>
</feature>
<feature type="region of interest" description="Disordered" evidence="2">
    <location>
        <begin position="224"/>
        <end position="261"/>
    </location>
</feature>
<feature type="compositionally biased region" description="Acidic residues" evidence="2">
    <location>
        <begin position="245"/>
        <end position="254"/>
    </location>
</feature>
<protein>
    <recommendedName>
        <fullName evidence="1">Small ribosomal subunit protein uS2</fullName>
    </recommendedName>
    <alternativeName>
        <fullName evidence="3">30S ribosomal protein S2</fullName>
    </alternativeName>
</protein>
<reference key="1">
    <citation type="journal article" date="2006" name="Proc. Natl. Acad. Sci. U.S.A.">
        <title>Comparative genomics of the lactic acid bacteria.</title>
        <authorList>
            <person name="Makarova K.S."/>
            <person name="Slesarev A."/>
            <person name="Wolf Y.I."/>
            <person name="Sorokin A."/>
            <person name="Mirkin B."/>
            <person name="Koonin E.V."/>
            <person name="Pavlov A."/>
            <person name="Pavlova N."/>
            <person name="Karamychev V."/>
            <person name="Polouchine N."/>
            <person name="Shakhova V."/>
            <person name="Grigoriev I."/>
            <person name="Lou Y."/>
            <person name="Rohksar D."/>
            <person name="Lucas S."/>
            <person name="Huang K."/>
            <person name="Goodstein D.M."/>
            <person name="Hawkins T."/>
            <person name="Plengvidhya V."/>
            <person name="Welker D."/>
            <person name="Hughes J."/>
            <person name="Goh Y."/>
            <person name="Benson A."/>
            <person name="Baldwin K."/>
            <person name="Lee J.-H."/>
            <person name="Diaz-Muniz I."/>
            <person name="Dosti B."/>
            <person name="Smeianov V."/>
            <person name="Wechter W."/>
            <person name="Barabote R."/>
            <person name="Lorca G."/>
            <person name="Altermann E."/>
            <person name="Barrangou R."/>
            <person name="Ganesan B."/>
            <person name="Xie Y."/>
            <person name="Rawsthorne H."/>
            <person name="Tamir D."/>
            <person name="Parker C."/>
            <person name="Breidt F."/>
            <person name="Broadbent J.R."/>
            <person name="Hutkins R."/>
            <person name="O'Sullivan D."/>
            <person name="Steele J."/>
            <person name="Unlu G."/>
            <person name="Saier M.H. Jr."/>
            <person name="Klaenhammer T."/>
            <person name="Richardson P."/>
            <person name="Kozyavkin S."/>
            <person name="Weimer B.C."/>
            <person name="Mills D.A."/>
        </authorList>
    </citation>
    <scope>NUCLEOTIDE SEQUENCE [LARGE SCALE GENOMIC DNA]</scope>
    <source>
        <strain>ATCC 33323 / DSM 20243 / BCRC 14619 / CIP 102991 / JCM 1131 / KCTC 3163 / NCIMB 11718 / NCTC 13722 / AM63</strain>
    </source>
</reference>
<accession>Q044D0</accession>
<proteinExistence type="inferred from homology"/>
<dbReference type="EMBL" id="CP000413">
    <property type="protein sequence ID" value="ABJ60192.1"/>
    <property type="status" value="ALT_INIT"/>
    <property type="molecule type" value="Genomic_DNA"/>
</dbReference>
<dbReference type="RefSeq" id="WP_003647490.1">
    <property type="nucleotide sequence ID" value="NZ_WBMG01000005.1"/>
</dbReference>
<dbReference type="SMR" id="Q044D0"/>
<dbReference type="GeneID" id="29640166"/>
<dbReference type="KEGG" id="lga:LGAS_0801"/>
<dbReference type="HOGENOM" id="CLU_040318_1_2_9"/>
<dbReference type="BioCyc" id="LGAS324831:G1G6Y-795-MONOMER"/>
<dbReference type="Proteomes" id="UP000000664">
    <property type="component" value="Chromosome"/>
</dbReference>
<dbReference type="GO" id="GO:0022627">
    <property type="term" value="C:cytosolic small ribosomal subunit"/>
    <property type="evidence" value="ECO:0007669"/>
    <property type="project" value="TreeGrafter"/>
</dbReference>
<dbReference type="GO" id="GO:0003735">
    <property type="term" value="F:structural constituent of ribosome"/>
    <property type="evidence" value="ECO:0007669"/>
    <property type="project" value="InterPro"/>
</dbReference>
<dbReference type="GO" id="GO:0006412">
    <property type="term" value="P:translation"/>
    <property type="evidence" value="ECO:0007669"/>
    <property type="project" value="UniProtKB-UniRule"/>
</dbReference>
<dbReference type="CDD" id="cd01425">
    <property type="entry name" value="RPS2"/>
    <property type="match status" value="1"/>
</dbReference>
<dbReference type="FunFam" id="1.10.287.610:FF:000001">
    <property type="entry name" value="30S ribosomal protein S2"/>
    <property type="match status" value="1"/>
</dbReference>
<dbReference type="Gene3D" id="3.40.50.10490">
    <property type="entry name" value="Glucose-6-phosphate isomerase like protein, domain 1"/>
    <property type="match status" value="1"/>
</dbReference>
<dbReference type="Gene3D" id="1.10.287.610">
    <property type="entry name" value="Helix hairpin bin"/>
    <property type="match status" value="1"/>
</dbReference>
<dbReference type="HAMAP" id="MF_00291_B">
    <property type="entry name" value="Ribosomal_uS2_B"/>
    <property type="match status" value="1"/>
</dbReference>
<dbReference type="InterPro" id="IPR001865">
    <property type="entry name" value="Ribosomal_uS2"/>
</dbReference>
<dbReference type="InterPro" id="IPR005706">
    <property type="entry name" value="Ribosomal_uS2_bac/mit/plastid"/>
</dbReference>
<dbReference type="InterPro" id="IPR018130">
    <property type="entry name" value="Ribosomal_uS2_CS"/>
</dbReference>
<dbReference type="InterPro" id="IPR023591">
    <property type="entry name" value="Ribosomal_uS2_flav_dom_sf"/>
</dbReference>
<dbReference type="NCBIfam" id="TIGR01011">
    <property type="entry name" value="rpsB_bact"/>
    <property type="match status" value="1"/>
</dbReference>
<dbReference type="PANTHER" id="PTHR12534">
    <property type="entry name" value="30S RIBOSOMAL PROTEIN S2 PROKARYOTIC AND ORGANELLAR"/>
    <property type="match status" value="1"/>
</dbReference>
<dbReference type="PANTHER" id="PTHR12534:SF0">
    <property type="entry name" value="SMALL RIBOSOMAL SUBUNIT PROTEIN US2M"/>
    <property type="match status" value="1"/>
</dbReference>
<dbReference type="Pfam" id="PF00318">
    <property type="entry name" value="Ribosomal_S2"/>
    <property type="match status" value="1"/>
</dbReference>
<dbReference type="PRINTS" id="PR00395">
    <property type="entry name" value="RIBOSOMALS2"/>
</dbReference>
<dbReference type="SUPFAM" id="SSF52313">
    <property type="entry name" value="Ribosomal protein S2"/>
    <property type="match status" value="1"/>
</dbReference>
<dbReference type="PROSITE" id="PS00962">
    <property type="entry name" value="RIBOSOMAL_S2_1"/>
    <property type="match status" value="1"/>
</dbReference>
<dbReference type="PROSITE" id="PS00963">
    <property type="entry name" value="RIBOSOMAL_S2_2"/>
    <property type="match status" value="1"/>
</dbReference>